<reference key="1">
    <citation type="journal article" date="2004" name="Proc. Natl. Acad. Sci. U.S.A.">
        <title>The louse-borne human pathogen Bartonella quintana is a genomic derivative of the zoonotic agent Bartonella henselae.</title>
        <authorList>
            <person name="Alsmark U.C.M."/>
            <person name="Frank A.C."/>
            <person name="Karlberg E.O."/>
            <person name="Legault B.-A."/>
            <person name="Ardell D.H."/>
            <person name="Canbaeck B."/>
            <person name="Eriksson A.-S."/>
            <person name="Naeslund A.K."/>
            <person name="Handley S.A."/>
            <person name="Huvet M."/>
            <person name="La Scola B."/>
            <person name="Holmberg M."/>
            <person name="Andersson S.G.E."/>
        </authorList>
    </citation>
    <scope>NUCLEOTIDE SEQUENCE [LARGE SCALE GENOMIC DNA]</scope>
    <source>
        <strain>ATCC 49882 / DSM 28221 / CCUG 30454 / Houston 1</strain>
    </source>
</reference>
<proteinExistence type="inferred from homology"/>
<comment type="function">
    <text evidence="1">Associates with the EF-Tu.GDP complex and induces the exchange of GDP to GTP. It remains bound to the aminoacyl-tRNA.EF-Tu.GTP complex up to the GTP hydrolysis stage on the ribosome.</text>
</comment>
<comment type="subcellular location">
    <subcellularLocation>
        <location evidence="1">Cytoplasm</location>
    </subcellularLocation>
</comment>
<comment type="similarity">
    <text evidence="1">Belongs to the EF-Ts family.</text>
</comment>
<sequence>MSITAAQVKELRELSGAGMMDCKAALAETNGDMEAAVDWLRKKGIAKADKKAGRTAAEGLIGVVSQDLSAVLVEINSETDFVARNDVFQDIVRNVATAALGTEGSIDAVCASFYPGSEKTVEATIKDAIATIGENMTFRRSAKLSVEDGVVATYIHNSVAEGLGKLGVLVAIETTGNKKAAAAFGRQVAMHIAATNPLALTAEDVDSSAIEREKAIFSEQARQSGKPENIIEKMVEGRMRKFFEEVVLLSQAFVMNPDITVDAALKDAEKSIGAPAKITAFIRFALGEGVEKEESDFAAEVAAAAKG</sequence>
<protein>
    <recommendedName>
        <fullName evidence="1">Elongation factor Ts</fullName>
        <shortName evidence="1">EF-Ts</shortName>
    </recommendedName>
</protein>
<accession>Q6G5C8</accession>
<evidence type="ECO:0000255" key="1">
    <source>
        <dbReference type="HAMAP-Rule" id="MF_00050"/>
    </source>
</evidence>
<organism>
    <name type="scientific">Bartonella henselae (strain ATCC 49882 / DSM 28221 / CCUG 30454 / Houston 1)</name>
    <name type="common">Rochalimaea henselae</name>
    <dbReference type="NCBI Taxonomy" id="283166"/>
    <lineage>
        <taxon>Bacteria</taxon>
        <taxon>Pseudomonadati</taxon>
        <taxon>Pseudomonadota</taxon>
        <taxon>Alphaproteobacteria</taxon>
        <taxon>Hyphomicrobiales</taxon>
        <taxon>Bartonellaceae</taxon>
        <taxon>Bartonella</taxon>
    </lineage>
</organism>
<dbReference type="EMBL" id="BX897699">
    <property type="protein sequence ID" value="CAF27427.1"/>
    <property type="molecule type" value="Genomic_DNA"/>
</dbReference>
<dbReference type="RefSeq" id="WP_011180547.1">
    <property type="nucleotide sequence ID" value="NZ_LRIJ02000001.1"/>
</dbReference>
<dbReference type="SMR" id="Q6G5C8"/>
<dbReference type="PaxDb" id="283166-BH06230"/>
<dbReference type="EnsemblBacteria" id="CAF27427">
    <property type="protein sequence ID" value="CAF27427"/>
    <property type="gene ID" value="BH06230"/>
</dbReference>
<dbReference type="GeneID" id="92985651"/>
<dbReference type="KEGG" id="bhe:BH06230"/>
<dbReference type="eggNOG" id="COG0264">
    <property type="taxonomic scope" value="Bacteria"/>
</dbReference>
<dbReference type="OrthoDB" id="9808348at2"/>
<dbReference type="Proteomes" id="UP000000421">
    <property type="component" value="Chromosome"/>
</dbReference>
<dbReference type="GO" id="GO:0005737">
    <property type="term" value="C:cytoplasm"/>
    <property type="evidence" value="ECO:0007669"/>
    <property type="project" value="UniProtKB-SubCell"/>
</dbReference>
<dbReference type="GO" id="GO:0003746">
    <property type="term" value="F:translation elongation factor activity"/>
    <property type="evidence" value="ECO:0007669"/>
    <property type="project" value="UniProtKB-UniRule"/>
</dbReference>
<dbReference type="CDD" id="cd14275">
    <property type="entry name" value="UBA_EF-Ts"/>
    <property type="match status" value="1"/>
</dbReference>
<dbReference type="FunFam" id="1.10.286.20:FF:000001">
    <property type="entry name" value="Elongation factor Ts"/>
    <property type="match status" value="1"/>
</dbReference>
<dbReference type="FunFam" id="1.10.8.10:FF:000001">
    <property type="entry name" value="Elongation factor Ts"/>
    <property type="match status" value="1"/>
</dbReference>
<dbReference type="Gene3D" id="1.10.286.20">
    <property type="match status" value="1"/>
</dbReference>
<dbReference type="Gene3D" id="1.10.8.10">
    <property type="entry name" value="DNA helicase RuvA subunit, C-terminal domain"/>
    <property type="match status" value="1"/>
</dbReference>
<dbReference type="Gene3D" id="3.30.479.20">
    <property type="entry name" value="Elongation factor Ts, dimerisation domain"/>
    <property type="match status" value="2"/>
</dbReference>
<dbReference type="HAMAP" id="MF_00050">
    <property type="entry name" value="EF_Ts"/>
    <property type="match status" value="1"/>
</dbReference>
<dbReference type="InterPro" id="IPR036402">
    <property type="entry name" value="EF-Ts_dimer_sf"/>
</dbReference>
<dbReference type="InterPro" id="IPR001816">
    <property type="entry name" value="Transl_elong_EFTs/EF1B"/>
</dbReference>
<dbReference type="InterPro" id="IPR014039">
    <property type="entry name" value="Transl_elong_EFTs/EF1B_dimer"/>
</dbReference>
<dbReference type="InterPro" id="IPR018101">
    <property type="entry name" value="Transl_elong_Ts_CS"/>
</dbReference>
<dbReference type="InterPro" id="IPR009060">
    <property type="entry name" value="UBA-like_sf"/>
</dbReference>
<dbReference type="NCBIfam" id="TIGR00116">
    <property type="entry name" value="tsf"/>
    <property type="match status" value="1"/>
</dbReference>
<dbReference type="PANTHER" id="PTHR11741">
    <property type="entry name" value="ELONGATION FACTOR TS"/>
    <property type="match status" value="1"/>
</dbReference>
<dbReference type="PANTHER" id="PTHR11741:SF0">
    <property type="entry name" value="ELONGATION FACTOR TS, MITOCHONDRIAL"/>
    <property type="match status" value="1"/>
</dbReference>
<dbReference type="Pfam" id="PF00889">
    <property type="entry name" value="EF_TS"/>
    <property type="match status" value="1"/>
</dbReference>
<dbReference type="SUPFAM" id="SSF54713">
    <property type="entry name" value="Elongation factor Ts (EF-Ts), dimerisation domain"/>
    <property type="match status" value="2"/>
</dbReference>
<dbReference type="SUPFAM" id="SSF46934">
    <property type="entry name" value="UBA-like"/>
    <property type="match status" value="1"/>
</dbReference>
<dbReference type="PROSITE" id="PS01127">
    <property type="entry name" value="EF_TS_2"/>
    <property type="match status" value="1"/>
</dbReference>
<name>EFTS_BARHE</name>
<gene>
    <name evidence="1" type="primary">tsf</name>
    <name type="ordered locus">BH06230</name>
</gene>
<keyword id="KW-0963">Cytoplasm</keyword>
<keyword id="KW-0251">Elongation factor</keyword>
<keyword id="KW-0648">Protein biosynthesis</keyword>
<feature type="chain" id="PRO_0000161080" description="Elongation factor Ts">
    <location>
        <begin position="1"/>
        <end position="307"/>
    </location>
</feature>
<feature type="region of interest" description="Involved in Mg(2+) ion dislocation from EF-Tu" evidence="1">
    <location>
        <begin position="79"/>
        <end position="82"/>
    </location>
</feature>